<comment type="function">
    <text evidence="1">Catalyzes the transfer of an acyl group from acyl-phosphate (acyl-PO(4)) to glycerol-3-phosphate (G3P) to form lysophosphatidic acid (LPA). This enzyme utilizes acyl-phosphate as fatty acyl donor, but not acyl-CoA or acyl-ACP.</text>
</comment>
<comment type="catalytic activity">
    <reaction evidence="1">
        <text>an acyl phosphate + sn-glycerol 3-phosphate = a 1-acyl-sn-glycero-3-phosphate + phosphate</text>
        <dbReference type="Rhea" id="RHEA:34075"/>
        <dbReference type="ChEBI" id="CHEBI:43474"/>
        <dbReference type="ChEBI" id="CHEBI:57597"/>
        <dbReference type="ChEBI" id="CHEBI:57970"/>
        <dbReference type="ChEBI" id="CHEBI:59918"/>
        <dbReference type="EC" id="2.3.1.275"/>
    </reaction>
</comment>
<comment type="pathway">
    <text evidence="1">Lipid metabolism; phospholipid metabolism.</text>
</comment>
<comment type="subunit">
    <text evidence="1">Probably interacts with PlsX.</text>
</comment>
<comment type="subcellular location">
    <subcellularLocation>
        <location evidence="1">Cell membrane</location>
        <topology evidence="1">Multi-pass membrane protein</topology>
    </subcellularLocation>
</comment>
<comment type="similarity">
    <text evidence="1">Belongs to the PlsY family.</text>
</comment>
<name>PLSY_STRMU</name>
<gene>
    <name evidence="1" type="primary">plsY</name>
    <name type="ordered locus">SMU_1211</name>
</gene>
<dbReference type="EC" id="2.3.1.275" evidence="1"/>
<dbReference type="EMBL" id="AE014133">
    <property type="protein sequence ID" value="AAN58897.1"/>
    <property type="molecule type" value="Genomic_DNA"/>
</dbReference>
<dbReference type="RefSeq" id="NP_721591.1">
    <property type="nucleotide sequence ID" value="NC_004350.2"/>
</dbReference>
<dbReference type="RefSeq" id="WP_002263268.1">
    <property type="nucleotide sequence ID" value="NC_004350.2"/>
</dbReference>
<dbReference type="SMR" id="P59255"/>
<dbReference type="STRING" id="210007.SMU_1211"/>
<dbReference type="KEGG" id="smu:SMU_1211"/>
<dbReference type="PATRIC" id="fig|210007.7.peg.1085"/>
<dbReference type="eggNOG" id="COG0344">
    <property type="taxonomic scope" value="Bacteria"/>
</dbReference>
<dbReference type="HOGENOM" id="CLU_081254_4_0_9"/>
<dbReference type="OrthoDB" id="9777124at2"/>
<dbReference type="PhylomeDB" id="P59255"/>
<dbReference type="UniPathway" id="UPA00085"/>
<dbReference type="Proteomes" id="UP000002512">
    <property type="component" value="Chromosome"/>
</dbReference>
<dbReference type="GO" id="GO:0005886">
    <property type="term" value="C:plasma membrane"/>
    <property type="evidence" value="ECO:0007669"/>
    <property type="project" value="UniProtKB-SubCell"/>
</dbReference>
<dbReference type="GO" id="GO:0043772">
    <property type="term" value="F:acyl-phosphate glycerol-3-phosphate acyltransferase activity"/>
    <property type="evidence" value="ECO:0007669"/>
    <property type="project" value="UniProtKB-UniRule"/>
</dbReference>
<dbReference type="GO" id="GO:0008654">
    <property type="term" value="P:phospholipid biosynthetic process"/>
    <property type="evidence" value="ECO:0007669"/>
    <property type="project" value="UniProtKB-UniRule"/>
</dbReference>
<dbReference type="HAMAP" id="MF_01043">
    <property type="entry name" value="PlsY"/>
    <property type="match status" value="1"/>
</dbReference>
<dbReference type="InterPro" id="IPR003811">
    <property type="entry name" value="G3P_acylTferase_PlsY"/>
</dbReference>
<dbReference type="NCBIfam" id="TIGR00023">
    <property type="entry name" value="glycerol-3-phosphate 1-O-acyltransferase PlsY"/>
    <property type="match status" value="1"/>
</dbReference>
<dbReference type="PANTHER" id="PTHR30309:SF0">
    <property type="entry name" value="GLYCEROL-3-PHOSPHATE ACYLTRANSFERASE-RELATED"/>
    <property type="match status" value="1"/>
</dbReference>
<dbReference type="PANTHER" id="PTHR30309">
    <property type="entry name" value="INNER MEMBRANE PROTEIN YGIH"/>
    <property type="match status" value="1"/>
</dbReference>
<dbReference type="Pfam" id="PF02660">
    <property type="entry name" value="G3P_acyltransf"/>
    <property type="match status" value="1"/>
</dbReference>
<dbReference type="SMART" id="SM01207">
    <property type="entry name" value="G3P_acyltransf"/>
    <property type="match status" value="1"/>
</dbReference>
<accession>P59255</accession>
<keyword id="KW-1003">Cell membrane</keyword>
<keyword id="KW-0444">Lipid biosynthesis</keyword>
<keyword id="KW-0443">Lipid metabolism</keyword>
<keyword id="KW-0472">Membrane</keyword>
<keyword id="KW-0594">Phospholipid biosynthesis</keyword>
<keyword id="KW-1208">Phospholipid metabolism</keyword>
<keyword id="KW-1185">Reference proteome</keyword>
<keyword id="KW-0808">Transferase</keyword>
<keyword id="KW-0812">Transmembrane</keyword>
<keyword id="KW-1133">Transmembrane helix</keyword>
<evidence type="ECO:0000255" key="1">
    <source>
        <dbReference type="HAMAP-Rule" id="MF_01043"/>
    </source>
</evidence>
<protein>
    <recommendedName>
        <fullName evidence="1">Glycerol-3-phosphate acyltransferase</fullName>
    </recommendedName>
    <alternativeName>
        <fullName evidence="1">Acyl-PO4 G3P acyltransferase</fullName>
    </alternativeName>
    <alternativeName>
        <fullName evidence="1">Acyl-phosphate--glycerol-3-phosphate acyltransferase</fullName>
    </alternativeName>
    <alternativeName>
        <fullName evidence="1">G3P acyltransferase</fullName>
        <shortName evidence="1">GPAT</shortName>
        <ecNumber evidence="1">2.3.1.275</ecNumber>
    </alternativeName>
    <alternativeName>
        <fullName evidence="1">Lysophosphatidic acid synthase</fullName>
        <shortName evidence="1">LPA synthase</shortName>
    </alternativeName>
</protein>
<feature type="chain" id="PRO_0000188463" description="Glycerol-3-phosphate acyltransferase">
    <location>
        <begin position="1"/>
        <end position="212"/>
    </location>
</feature>
<feature type="transmembrane region" description="Helical" evidence="1">
    <location>
        <begin position="3"/>
        <end position="23"/>
    </location>
</feature>
<feature type="transmembrane region" description="Helical" evidence="1">
    <location>
        <begin position="69"/>
        <end position="89"/>
    </location>
</feature>
<feature type="transmembrane region" description="Helical" evidence="1">
    <location>
        <begin position="110"/>
        <end position="130"/>
    </location>
</feature>
<feature type="transmembrane region" description="Helical" evidence="1">
    <location>
        <begin position="143"/>
        <end position="163"/>
    </location>
</feature>
<feature type="transmembrane region" description="Helical" evidence="1">
    <location>
        <begin position="165"/>
        <end position="185"/>
    </location>
</feature>
<sequence>MKLILLIIAAYLLGSIPTGLWIGKYFYGKNLRDYGSGNMGTTNTFRVLGPKAGLLTFTVDFLKGTLATLLPMWLGVTHISPLLFGFFAILGHTFPIFANFKGGKAVATSAGILLGFAPFYLIFLLFIFFFTLYLTSMISLSSVIAASIAIITVLIFPALHFLLKDYDFLFVLIVISAGSLIIIRHRENLVRIKNKTESLVPFGLNITKQKTH</sequence>
<organism>
    <name type="scientific">Streptococcus mutans serotype c (strain ATCC 700610 / UA159)</name>
    <dbReference type="NCBI Taxonomy" id="210007"/>
    <lineage>
        <taxon>Bacteria</taxon>
        <taxon>Bacillati</taxon>
        <taxon>Bacillota</taxon>
        <taxon>Bacilli</taxon>
        <taxon>Lactobacillales</taxon>
        <taxon>Streptococcaceae</taxon>
        <taxon>Streptococcus</taxon>
    </lineage>
</organism>
<reference key="1">
    <citation type="journal article" date="2002" name="Proc. Natl. Acad. Sci. U.S.A.">
        <title>Genome sequence of Streptococcus mutans UA159, a cariogenic dental pathogen.</title>
        <authorList>
            <person name="Ajdic D.J."/>
            <person name="McShan W.M."/>
            <person name="McLaughlin R.E."/>
            <person name="Savic G."/>
            <person name="Chang J."/>
            <person name="Carson M.B."/>
            <person name="Primeaux C."/>
            <person name="Tian R."/>
            <person name="Kenton S."/>
            <person name="Jia H.G."/>
            <person name="Lin S.P."/>
            <person name="Qian Y."/>
            <person name="Li S."/>
            <person name="Zhu H."/>
            <person name="Najar F.Z."/>
            <person name="Lai H."/>
            <person name="White J."/>
            <person name="Roe B.A."/>
            <person name="Ferretti J.J."/>
        </authorList>
    </citation>
    <scope>NUCLEOTIDE SEQUENCE [LARGE SCALE GENOMIC DNA]</scope>
    <source>
        <strain>ATCC 700610 / UA159</strain>
    </source>
</reference>
<proteinExistence type="inferred from homology"/>